<keyword id="KW-0378">Hydrolase</keyword>
<keyword id="KW-0460">Magnesium</keyword>
<keyword id="KW-0479">Metal-binding</keyword>
<keyword id="KW-1185">Reference proteome</keyword>
<name>Y4841_PSEAE</name>
<accession>Q9HUW9</accession>
<sequence length="169" mass="18865">MAHRAASDAELIAWVDEQDRPLGSLPRAELRERGLIGRGTFILLFNSAGELCVQRRTLSKAVYPGYWDLAAGGMVQAGEPYADSAARELEEELGIRDAVLREHGRFFFDEPGNRLWCAVFSAVSDAPLRLQAEEISEARFIRPELALEEARSLPYCPDSLQALRLYLDA</sequence>
<reference key="1">
    <citation type="journal article" date="2000" name="Nature">
        <title>Complete genome sequence of Pseudomonas aeruginosa PAO1, an opportunistic pathogen.</title>
        <authorList>
            <person name="Stover C.K."/>
            <person name="Pham X.-Q.T."/>
            <person name="Erwin A.L."/>
            <person name="Mizoguchi S.D."/>
            <person name="Warrener P."/>
            <person name="Hickey M.J."/>
            <person name="Brinkman F.S.L."/>
            <person name="Hufnagle W.O."/>
            <person name="Kowalik D.J."/>
            <person name="Lagrou M."/>
            <person name="Garber R.L."/>
            <person name="Goltry L."/>
            <person name="Tolentino E."/>
            <person name="Westbrock-Wadman S."/>
            <person name="Yuan Y."/>
            <person name="Brody L.L."/>
            <person name="Coulter S.N."/>
            <person name="Folger K.R."/>
            <person name="Kas A."/>
            <person name="Larbig K."/>
            <person name="Lim R.M."/>
            <person name="Smith K.A."/>
            <person name="Spencer D.H."/>
            <person name="Wong G.K.-S."/>
            <person name="Wu Z."/>
            <person name="Paulsen I.T."/>
            <person name="Reizer J."/>
            <person name="Saier M.H. Jr."/>
            <person name="Hancock R.E.W."/>
            <person name="Lory S."/>
            <person name="Olson M.V."/>
        </authorList>
    </citation>
    <scope>NUCLEOTIDE SEQUENCE [LARGE SCALE GENOMIC DNA]</scope>
    <source>
        <strain>ATCC 15692 / DSM 22644 / CIP 104116 / JCM 14847 / LMG 12228 / 1C / PRS 101 / PAO1</strain>
    </source>
</reference>
<dbReference type="EC" id="3.6.-.-"/>
<dbReference type="EMBL" id="AE004091">
    <property type="protein sequence ID" value="AAG08226.1"/>
    <property type="status" value="ALT_INIT"/>
    <property type="molecule type" value="Genomic_DNA"/>
</dbReference>
<dbReference type="PIR" id="B83041">
    <property type="entry name" value="B83041"/>
</dbReference>
<dbReference type="RefSeq" id="NP_253528.1">
    <property type="nucleotide sequence ID" value="NC_002516.2"/>
</dbReference>
<dbReference type="SMR" id="Q9HUW9"/>
<dbReference type="FunCoup" id="Q9HUW9">
    <property type="interactions" value="20"/>
</dbReference>
<dbReference type="STRING" id="208964.PA4841"/>
<dbReference type="PaxDb" id="208964-PA4841"/>
<dbReference type="DNASU" id="879630"/>
<dbReference type="GeneID" id="879630"/>
<dbReference type="KEGG" id="pae:PA4841"/>
<dbReference type="PATRIC" id="fig|208964.12.peg.5072"/>
<dbReference type="PseudoCAP" id="PA4841"/>
<dbReference type="HOGENOM" id="CLU_060552_3_0_6"/>
<dbReference type="InParanoid" id="Q9HUW9"/>
<dbReference type="OrthoDB" id="517136at2"/>
<dbReference type="PhylomeDB" id="Q9HUW9"/>
<dbReference type="PHI-base" id="PHI:10782"/>
<dbReference type="Proteomes" id="UP000002438">
    <property type="component" value="Chromosome"/>
</dbReference>
<dbReference type="GO" id="GO:0016817">
    <property type="term" value="F:hydrolase activity, acting on acid anhydrides"/>
    <property type="evidence" value="ECO:0007669"/>
    <property type="project" value="InterPro"/>
</dbReference>
<dbReference type="GO" id="GO:0046872">
    <property type="term" value="F:metal ion binding"/>
    <property type="evidence" value="ECO:0007669"/>
    <property type="project" value="UniProtKB-KW"/>
</dbReference>
<dbReference type="CDD" id="cd04697">
    <property type="entry name" value="NUDIX_Hydrolase"/>
    <property type="match status" value="1"/>
</dbReference>
<dbReference type="Gene3D" id="3.90.79.10">
    <property type="entry name" value="Nucleoside Triphosphate Pyrophosphohydrolase"/>
    <property type="match status" value="1"/>
</dbReference>
<dbReference type="InterPro" id="IPR015797">
    <property type="entry name" value="NUDIX_hydrolase-like_dom_sf"/>
</dbReference>
<dbReference type="InterPro" id="IPR000086">
    <property type="entry name" value="NUDIX_hydrolase_dom"/>
</dbReference>
<dbReference type="InterPro" id="IPR024195">
    <property type="entry name" value="NUDIX_hydrolase_YfcD_pred"/>
</dbReference>
<dbReference type="PANTHER" id="PTHR10885">
    <property type="entry name" value="ISOPENTENYL-DIPHOSPHATE DELTA-ISOMERASE"/>
    <property type="match status" value="1"/>
</dbReference>
<dbReference type="PANTHER" id="PTHR10885:SF0">
    <property type="entry name" value="ISOPENTENYL-DIPHOSPHATE DELTA-ISOMERASE"/>
    <property type="match status" value="1"/>
</dbReference>
<dbReference type="Pfam" id="PF00293">
    <property type="entry name" value="NUDIX"/>
    <property type="match status" value="1"/>
</dbReference>
<dbReference type="PIRSF" id="PIRSF017340">
    <property type="entry name" value="Nudix_hydro"/>
    <property type="match status" value="1"/>
</dbReference>
<dbReference type="SUPFAM" id="SSF55811">
    <property type="entry name" value="Nudix"/>
    <property type="match status" value="1"/>
</dbReference>
<dbReference type="PROSITE" id="PS51462">
    <property type="entry name" value="NUDIX"/>
    <property type="match status" value="1"/>
</dbReference>
<comment type="cofactor">
    <cofactor evidence="1">
        <name>Mg(2+)</name>
        <dbReference type="ChEBI" id="CHEBI:18420"/>
    </cofactor>
</comment>
<comment type="similarity">
    <text evidence="3">Belongs to the Nudix hydrolase family.</text>
</comment>
<comment type="sequence caution" evidence="3">
    <conflict type="erroneous initiation">
        <sequence resource="EMBL-CDS" id="AAG08226"/>
    </conflict>
</comment>
<protein>
    <recommendedName>
        <fullName>Uncharacterized Nudix hydrolase PA4841</fullName>
        <ecNumber>3.6.-.-</ecNumber>
    </recommendedName>
</protein>
<gene>
    <name type="ordered locus">PA4841</name>
</gene>
<proteinExistence type="inferred from homology"/>
<evidence type="ECO:0000250" key="1"/>
<evidence type="ECO:0000255" key="2">
    <source>
        <dbReference type="PROSITE-ProRule" id="PRU00794"/>
    </source>
</evidence>
<evidence type="ECO:0000305" key="3"/>
<organism>
    <name type="scientific">Pseudomonas aeruginosa (strain ATCC 15692 / DSM 22644 / CIP 104116 / JCM 14847 / LMG 12228 / 1C / PRS 101 / PAO1)</name>
    <dbReference type="NCBI Taxonomy" id="208964"/>
    <lineage>
        <taxon>Bacteria</taxon>
        <taxon>Pseudomonadati</taxon>
        <taxon>Pseudomonadota</taxon>
        <taxon>Gammaproteobacteria</taxon>
        <taxon>Pseudomonadales</taxon>
        <taxon>Pseudomonadaceae</taxon>
        <taxon>Pseudomonas</taxon>
    </lineage>
</organism>
<feature type="chain" id="PRO_0000057085" description="Uncharacterized Nudix hydrolase PA4841">
    <location>
        <begin position="1"/>
        <end position="169"/>
    </location>
</feature>
<feature type="domain" description="Nudix hydrolase" evidence="2">
    <location>
        <begin position="35"/>
        <end position="163"/>
    </location>
</feature>
<feature type="short sequence motif" description="Nudix box">
    <location>
        <begin position="81"/>
        <end position="103"/>
    </location>
</feature>
<feature type="binding site" evidence="1">
    <location>
        <position position="88"/>
    </location>
    <ligand>
        <name>Mg(2+)</name>
        <dbReference type="ChEBI" id="CHEBI:18420"/>
    </ligand>
</feature>
<feature type="binding site" evidence="1">
    <location>
        <position position="92"/>
    </location>
    <ligand>
        <name>Mg(2+)</name>
        <dbReference type="ChEBI" id="CHEBI:18420"/>
    </ligand>
</feature>